<accession>A4X5B6</accession>
<sequence>MSVIRPTTVEVETSLRLVAPDATALPVRASLRYDPADPYAVHVLFHAESAGGEAVSWSFARELLVTGLDEPAGIGDVRVWPWATPRGDFVALALSSPDGNALFEVPRSVLVRFLRRTYVVVARGREAEHLDVDTAVNRLLAGR</sequence>
<name>SSGB_SALTO</name>
<reference key="1">
    <citation type="journal article" date="2009" name="J. Biol. Chem.">
        <title>Structural and functional characterizations of SsgB, a conserved activator of developmental cell division in morphologically complex actinomycetes.</title>
        <authorList>
            <person name="Xu Q."/>
            <person name="Traag B.A."/>
            <person name="Willemse J."/>
            <person name="McMullan D."/>
            <person name="Miller M.D."/>
            <person name="Elsliger M.A."/>
            <person name="Abdubek P."/>
            <person name="Astakhova T."/>
            <person name="Axelrod H.L."/>
            <person name="Bakolitsa C."/>
            <person name="Carlton D."/>
            <person name="Chen C."/>
            <person name="Chiu H.J."/>
            <person name="Chruszcz M."/>
            <person name="Clayton T."/>
            <person name="Das D."/>
            <person name="Deller M.C."/>
            <person name="Duan L."/>
            <person name="Ellrott K."/>
            <person name="Ernst D."/>
            <person name="Farr C.L."/>
            <person name="Feuerhelm J."/>
            <person name="Grant J.C."/>
            <person name="Grzechnik A."/>
            <person name="Grzechnik S.K."/>
            <person name="Han G.W."/>
            <person name="Jaroszewski L."/>
            <person name="Jin K.K."/>
            <person name="Klock H.E."/>
            <person name="Knuth M.W."/>
            <person name="Kozbial P."/>
            <person name="Krishna S.S."/>
            <person name="Kumar A."/>
            <person name="Marciano D."/>
            <person name="Minor W."/>
            <person name="Mommaas A.M."/>
            <person name="Morse A.T."/>
            <person name="Nigoghossian E."/>
            <person name="Nopakun A."/>
            <person name="Okach L."/>
            <person name="Oommachen S."/>
            <person name="Paulsen J."/>
            <person name="Puckett C."/>
            <person name="Reyes R."/>
            <person name="Rife C.L."/>
            <person name="Sefcovic N."/>
            <person name="Tien H.J."/>
            <person name="Trame C.B."/>
            <person name="van den Bedem H."/>
            <person name="Wang S."/>
            <person name="Weekes D."/>
            <person name="Hodgson K.O."/>
            <person name="Wooley J."/>
            <person name="Deacon A.M."/>
            <person name="Godzik A."/>
            <person name="Lesley S.A."/>
            <person name="Wilson I.A."/>
            <person name="van Wezel G.P."/>
        </authorList>
    </citation>
    <scope>NUCLEOTIDE SEQUENCE [GENOMIC DNA]</scope>
    <scope>FUNCTION</scope>
    <source>
        <strain evidence="4">ATCC BAA-916 / DSM 44818 / JCM 13857 / NBRC 105044 / CNB-440</strain>
    </source>
</reference>
<reference evidence="7" key="2">
    <citation type="journal article" date="2007" name="Proc. Natl. Acad. Sci. U.S.A.">
        <title>Genome sequencing reveals complex secondary metabolome in the marine actinomycete Salinispora tropica.</title>
        <authorList>
            <person name="Udwary D.W."/>
            <person name="Zeigler L."/>
            <person name="Asolkar R.N."/>
            <person name="Singan V."/>
            <person name="Lapidus A."/>
            <person name="Fenical W."/>
            <person name="Jensen P.R."/>
            <person name="Moore B.S."/>
        </authorList>
    </citation>
    <scope>NUCLEOTIDE SEQUENCE [LARGE SCALE GENOMIC DNA]</scope>
    <source>
        <strain evidence="7">ATCC BAA-916 / DSM 44818 / JCM 13857 / NBRC 105044 / CNB-440</strain>
    </source>
</reference>
<organism evidence="6">
    <name type="scientific">Salinispora tropica (strain ATCC BAA-916 / DSM 44818 / JCM 13857 / NBRC 105044 / CNB-440)</name>
    <dbReference type="NCBI Taxonomy" id="369723"/>
    <lineage>
        <taxon>Bacteria</taxon>
        <taxon>Bacillati</taxon>
        <taxon>Actinomycetota</taxon>
        <taxon>Actinomycetes</taxon>
        <taxon>Micromonosporales</taxon>
        <taxon>Micromonosporaceae</taxon>
        <taxon>Salinispora</taxon>
    </lineage>
</organism>
<protein>
    <recommendedName>
        <fullName evidence="4">Sporulation-specific cell division protein SsgB</fullName>
    </recommendedName>
    <alternativeName>
        <fullName evidence="4">Sporulation of Streptomyces griseus-like protein B</fullName>
    </alternativeName>
    <alternativeName>
        <fullName evidence="4">SsgA-like protein B</fullName>
        <shortName evidence="4">SALP B</shortName>
    </alternativeName>
</protein>
<proteinExistence type="inferred from homology"/>
<feature type="chain" id="PRO_0000435313" description="Sporulation-specific cell division protein SsgB">
    <location>
        <begin position="1"/>
        <end position="143"/>
    </location>
</feature>
<comment type="function">
    <text evidence="1 2 3">Involved in sporulation-specific cell division (PubMed:19567872). Required for early stages of sporulation. Important in the process of growth cessation prior to sporulation-specific cell division. Recruits cell division protein FtsZ to the future septum sites and tethers the contractile ring structure (Z ring) to the cytoplasmic membrane during sporulation. Stimulates polymerization and filament length of FtsZ in vitro (By similarity).</text>
</comment>
<comment type="subunit">
    <text evidence="1 2">Interacts with SsgA. Interacts with FtsZ (via N-terminus).</text>
</comment>
<comment type="subcellular location">
    <subcellularLocation>
        <location evidence="2">Cell septum</location>
    </subcellularLocation>
    <text evidence="2">Localizes to the divisome in sporogenic aerial hyphae in a ladder-like manner. Temporospatial localization is controlled by SsgA and it colocalizes with SsgA in presporulation foci. Localizes to the septum sites prior to FtsZ and after that colocalizes with FtsZ at the divisome throughout cell division.</text>
</comment>
<comment type="similarity">
    <text evidence="5">Belongs to the SsgA family.</text>
</comment>
<dbReference type="EMBL" id="CP000667">
    <property type="protein sequence ID" value="ABP54066.1"/>
    <property type="molecule type" value="Genomic_DNA"/>
</dbReference>
<dbReference type="RefSeq" id="WP_011905498.1">
    <property type="nucleotide sequence ID" value="NC_009380.1"/>
</dbReference>
<dbReference type="SMR" id="A4X5B6"/>
<dbReference type="STRING" id="369723.Strop_1600"/>
<dbReference type="KEGG" id="stp:Strop_1600"/>
<dbReference type="PATRIC" id="fig|369723.5.peg.1638"/>
<dbReference type="eggNOG" id="ENOG5032RFA">
    <property type="taxonomic scope" value="Bacteria"/>
</dbReference>
<dbReference type="HOGENOM" id="CLU_126599_0_1_11"/>
<dbReference type="Proteomes" id="UP000000235">
    <property type="component" value="Chromosome"/>
</dbReference>
<dbReference type="GO" id="GO:0030428">
    <property type="term" value="C:cell septum"/>
    <property type="evidence" value="ECO:0007669"/>
    <property type="project" value="UniProtKB-SubCell"/>
</dbReference>
<dbReference type="GO" id="GO:0000917">
    <property type="term" value="P:division septum assembly"/>
    <property type="evidence" value="ECO:0007669"/>
    <property type="project" value="UniProtKB-KW"/>
</dbReference>
<dbReference type="GO" id="GO:0030435">
    <property type="term" value="P:sporulation resulting in formation of a cellular spore"/>
    <property type="evidence" value="ECO:0007669"/>
    <property type="project" value="UniProtKB-KW"/>
</dbReference>
<dbReference type="Gene3D" id="2.30.31.20">
    <property type="entry name" value="Sporulation-specific cell division protein SsgB"/>
    <property type="match status" value="1"/>
</dbReference>
<dbReference type="InterPro" id="IPR006776">
    <property type="entry name" value="SsgB"/>
</dbReference>
<dbReference type="InterPro" id="IPR038658">
    <property type="entry name" value="SsgB_sf"/>
</dbReference>
<dbReference type="Pfam" id="PF04686">
    <property type="entry name" value="SsgA"/>
    <property type="match status" value="1"/>
</dbReference>
<evidence type="ECO:0000250" key="1">
    <source>
        <dbReference type="UniProtKB" id="Q47N25"/>
    </source>
</evidence>
<evidence type="ECO:0000250" key="2">
    <source>
        <dbReference type="UniProtKB" id="Q9L268"/>
    </source>
</evidence>
<evidence type="ECO:0000269" key="3">
    <source>
    </source>
</evidence>
<evidence type="ECO:0000303" key="4">
    <source>
    </source>
</evidence>
<evidence type="ECO:0000305" key="5"/>
<evidence type="ECO:0000312" key="6">
    <source>
        <dbReference type="EMBL" id="ABP54066.1"/>
    </source>
</evidence>
<evidence type="ECO:0000312" key="7">
    <source>
        <dbReference type="Proteomes" id="UP000000235"/>
    </source>
</evidence>
<gene>
    <name evidence="4" type="primary">ssgB</name>
    <name evidence="6" type="ordered locus">Strop_1600</name>
</gene>
<keyword id="KW-0131">Cell cycle</keyword>
<keyword id="KW-0132">Cell division</keyword>
<keyword id="KW-1185">Reference proteome</keyword>
<keyword id="KW-0717">Septation</keyword>
<keyword id="KW-0749">Sporulation</keyword>